<protein>
    <recommendedName>
        <fullName evidence="2 8">Ribose-phosphate pyrophosphokinase</fullName>
        <shortName evidence="2 8">RPPK</shortName>
        <ecNumber evidence="2 5 6">2.7.6.1</ecNumber>
    </recommendedName>
    <alternativeName>
        <fullName evidence="2 9">5-phospho-D-ribosyl alpha-1-diphosphate synthase</fullName>
    </alternativeName>
    <alternativeName>
        <fullName evidence="2 11">Phosphoribosyl diphosphate synthase</fullName>
    </alternativeName>
    <alternativeName>
        <fullName evidence="2 8">Phosphoribosyl pyrophosphate synthase</fullName>
        <shortName evidence="2 10">P-Rib-PP synthase</shortName>
        <shortName evidence="11">PPRibP synthase</shortName>
        <shortName evidence="2 9">PRPP synthase</shortName>
        <shortName evidence="2 9">PRPPase</shortName>
    </alternativeName>
</protein>
<proteinExistence type="evidence at protein level"/>
<comment type="function">
    <text evidence="2 4 5 6 7 14">Involved in the biosynthesis of the central metabolite phospho-alpha-D-ribosyl-1-pyrophosphate (PRPP) via the transfer of pyrophosphoryl group from ATP to 1-hydroxyl of ribose-5-phosphate (Rib-5-P).</text>
</comment>
<comment type="catalytic activity">
    <reaction evidence="2 5 6">
        <text>D-ribose 5-phosphate + ATP = 5-phospho-alpha-D-ribose 1-diphosphate + AMP + H(+)</text>
        <dbReference type="Rhea" id="RHEA:15609"/>
        <dbReference type="ChEBI" id="CHEBI:15378"/>
        <dbReference type="ChEBI" id="CHEBI:30616"/>
        <dbReference type="ChEBI" id="CHEBI:58017"/>
        <dbReference type="ChEBI" id="CHEBI:78346"/>
        <dbReference type="ChEBI" id="CHEBI:456215"/>
        <dbReference type="EC" id="2.7.6.1"/>
    </reaction>
</comment>
<comment type="cofactor">
    <cofactor evidence="2 6 12">
        <name>Mg(2+)</name>
        <dbReference type="ChEBI" id="CHEBI:18420"/>
    </cofactor>
    <text evidence="4 6 12">Binds 2 Mg(2+) ions per subunit. Each Mg(2+) binds only one residue (His-136 and Asp-175, respectively) of this protein, however the magnesium ions also bind substrates and water molecules to complete their coordination spheres (PubMed:11790837, PubMed:2169413). Can also use Mn(2+) and Cd(2+) ions, but the activity is less than that obtained with Mg(2+) ions (PubMed:11790837, PubMed:2169413).</text>
</comment>
<comment type="activity regulation">
    <text evidence="5 6">Activated by inorganic phosphate, and to a lesser extent by sulfate ions (PubMed:2169413). In addition to form a complex with ATP, Mg(2+) also acts as a cofactor (PubMed:2169413). Strongly inhibited by ADP through competitive binding at the activation site and at a specific allosteric site (PubMed:16008562, PubMed:2169413). Less strongly inhibited by alpha,beta-methylene ATP (mADP), AMP, GDP, GMP and UTP (PubMed:16008562, PubMed:2169413).</text>
</comment>
<comment type="biophysicochemical properties">
    <kinetics>
        <KM evidence="5">191 uM for ATP (at pH 8 and 37 degrees Celsius)</KM>
        <KM evidence="5">230 uM for Rib-5-P (at pH 8 and 37 degrees Celsius)</KM>
        <KM evidence="6">480 uM for Rib-5-P (at pH 8.2 and 37 degrees Celsius)</KM>
        <KM evidence="6">660 uM for ATP (at pH 8.2 and 37 degrees Celsius)</KM>
        <Vmax evidence="5">108.0 umol/min/mg enzyme (at pH 8 and 37 degrees Celsius)</Vmax>
        <Vmax evidence="6">250.0 umol/min/mg enzyme (at pH 8.2 and 37 degrees Celsius)</Vmax>
    </kinetics>
    <phDependence>
        <text evidence="6">Optimum pH is 8-8.5. Activities at pH 7 and pH 9.5 are 35% and 85% of the maximal activity, respectively.</text>
    </phDependence>
</comment>
<comment type="pathway">
    <text evidence="2 16 17">Metabolic intermediate biosynthesis; 5-phospho-alpha-D-ribose 1-diphosphate biosynthesis; 5-phospho-alpha-D-ribose 1-diphosphate from D-ribose 5-phosphate (route I): step 1/1.</text>
</comment>
<comment type="subunit">
    <text evidence="3 4 12">Homohexamer; trimer of dimers.</text>
</comment>
<comment type="subcellular location">
    <subcellularLocation>
        <location evidence="2">Cytoplasm</location>
    </subcellularLocation>
</comment>
<comment type="miscellaneous">
    <text evidence="5">This enzyme uses a steady state ordered mechanism, where Mg(2+) binds first, followed by Mg-ATP and lastly, ribose 5-phosphate.</text>
</comment>
<comment type="similarity">
    <text evidence="2 12">Belongs to the ribose-phosphate pyrophosphokinase family. Class I subfamily.</text>
</comment>
<keyword id="KW-0002">3D-structure</keyword>
<keyword id="KW-0021">Allosteric enzyme</keyword>
<keyword id="KW-0067">ATP-binding</keyword>
<keyword id="KW-0963">Cytoplasm</keyword>
<keyword id="KW-0903">Direct protein sequencing</keyword>
<keyword id="KW-0418">Kinase</keyword>
<keyword id="KW-0460">Magnesium</keyword>
<keyword id="KW-0479">Metal-binding</keyword>
<keyword id="KW-0545">Nucleotide biosynthesis</keyword>
<keyword id="KW-0547">Nucleotide-binding</keyword>
<keyword id="KW-1185">Reference proteome</keyword>
<keyword id="KW-0808">Transferase</keyword>
<gene>
    <name evidence="2 13" type="primary">prs</name>
    <name type="ordered locus">BSU00510</name>
</gene>
<reference key="1">
    <citation type="journal article" date="1989" name="Mol. Gen. Genet.">
        <title>Primary structure of the tms and prs genes of Bacillus subtilis.</title>
        <authorList>
            <person name="Nilsson D."/>
            <person name="Hove-Jensen B."/>
            <person name="Arnvig K."/>
        </authorList>
    </citation>
    <scope>NUCLEOTIDE SEQUENCE [GENOMIC DNA]</scope>
</reference>
<reference key="2">
    <citation type="journal article" date="1994" name="DNA Res.">
        <title>Systematic sequencing of the 180 kilobase region of the Bacillus subtilis chromosome containing the replication origin.</title>
        <authorList>
            <person name="Ogasawara N."/>
            <person name="Nakai S."/>
            <person name="Yoshikawa H."/>
        </authorList>
    </citation>
    <scope>NUCLEOTIDE SEQUENCE [GENOMIC DNA]</scope>
    <source>
        <strain>168</strain>
    </source>
</reference>
<reference key="3">
    <citation type="journal article" date="1997" name="Nature">
        <title>The complete genome sequence of the Gram-positive bacterium Bacillus subtilis.</title>
        <authorList>
            <person name="Kunst F."/>
            <person name="Ogasawara N."/>
            <person name="Moszer I."/>
            <person name="Albertini A.M."/>
            <person name="Alloni G."/>
            <person name="Azevedo V."/>
            <person name="Bertero M.G."/>
            <person name="Bessieres P."/>
            <person name="Bolotin A."/>
            <person name="Borchert S."/>
            <person name="Borriss R."/>
            <person name="Boursier L."/>
            <person name="Brans A."/>
            <person name="Braun M."/>
            <person name="Brignell S.C."/>
            <person name="Bron S."/>
            <person name="Brouillet S."/>
            <person name="Bruschi C.V."/>
            <person name="Caldwell B."/>
            <person name="Capuano V."/>
            <person name="Carter N.M."/>
            <person name="Choi S.-K."/>
            <person name="Codani J.-J."/>
            <person name="Connerton I.F."/>
            <person name="Cummings N.J."/>
            <person name="Daniel R.A."/>
            <person name="Denizot F."/>
            <person name="Devine K.M."/>
            <person name="Duesterhoeft A."/>
            <person name="Ehrlich S.D."/>
            <person name="Emmerson P.T."/>
            <person name="Entian K.-D."/>
            <person name="Errington J."/>
            <person name="Fabret C."/>
            <person name="Ferrari E."/>
            <person name="Foulger D."/>
            <person name="Fritz C."/>
            <person name="Fujita M."/>
            <person name="Fujita Y."/>
            <person name="Fuma S."/>
            <person name="Galizzi A."/>
            <person name="Galleron N."/>
            <person name="Ghim S.-Y."/>
            <person name="Glaser P."/>
            <person name="Goffeau A."/>
            <person name="Golightly E.J."/>
            <person name="Grandi G."/>
            <person name="Guiseppi G."/>
            <person name="Guy B.J."/>
            <person name="Haga K."/>
            <person name="Haiech J."/>
            <person name="Harwood C.R."/>
            <person name="Henaut A."/>
            <person name="Hilbert H."/>
            <person name="Holsappel S."/>
            <person name="Hosono S."/>
            <person name="Hullo M.-F."/>
            <person name="Itaya M."/>
            <person name="Jones L.-M."/>
            <person name="Joris B."/>
            <person name="Karamata D."/>
            <person name="Kasahara Y."/>
            <person name="Klaerr-Blanchard M."/>
            <person name="Klein C."/>
            <person name="Kobayashi Y."/>
            <person name="Koetter P."/>
            <person name="Koningstein G."/>
            <person name="Krogh S."/>
            <person name="Kumano M."/>
            <person name="Kurita K."/>
            <person name="Lapidus A."/>
            <person name="Lardinois S."/>
            <person name="Lauber J."/>
            <person name="Lazarevic V."/>
            <person name="Lee S.-M."/>
            <person name="Levine A."/>
            <person name="Liu H."/>
            <person name="Masuda S."/>
            <person name="Mauel C."/>
            <person name="Medigue C."/>
            <person name="Medina N."/>
            <person name="Mellado R.P."/>
            <person name="Mizuno M."/>
            <person name="Moestl D."/>
            <person name="Nakai S."/>
            <person name="Noback M."/>
            <person name="Noone D."/>
            <person name="O'Reilly M."/>
            <person name="Ogawa K."/>
            <person name="Ogiwara A."/>
            <person name="Oudega B."/>
            <person name="Park S.-H."/>
            <person name="Parro V."/>
            <person name="Pohl T.M."/>
            <person name="Portetelle D."/>
            <person name="Porwollik S."/>
            <person name="Prescott A.M."/>
            <person name="Presecan E."/>
            <person name="Pujic P."/>
            <person name="Purnelle B."/>
            <person name="Rapoport G."/>
            <person name="Rey M."/>
            <person name="Reynolds S."/>
            <person name="Rieger M."/>
            <person name="Rivolta C."/>
            <person name="Rocha E."/>
            <person name="Roche B."/>
            <person name="Rose M."/>
            <person name="Sadaie Y."/>
            <person name="Sato T."/>
            <person name="Scanlan E."/>
            <person name="Schleich S."/>
            <person name="Schroeter R."/>
            <person name="Scoffone F."/>
            <person name="Sekiguchi J."/>
            <person name="Sekowska A."/>
            <person name="Seror S.J."/>
            <person name="Serror P."/>
            <person name="Shin B.-S."/>
            <person name="Soldo B."/>
            <person name="Sorokin A."/>
            <person name="Tacconi E."/>
            <person name="Takagi T."/>
            <person name="Takahashi H."/>
            <person name="Takemaru K."/>
            <person name="Takeuchi M."/>
            <person name="Tamakoshi A."/>
            <person name="Tanaka T."/>
            <person name="Terpstra P."/>
            <person name="Tognoni A."/>
            <person name="Tosato V."/>
            <person name="Uchiyama S."/>
            <person name="Vandenbol M."/>
            <person name="Vannier F."/>
            <person name="Vassarotti A."/>
            <person name="Viari A."/>
            <person name="Wambutt R."/>
            <person name="Wedler E."/>
            <person name="Wedler H."/>
            <person name="Weitzenegger T."/>
            <person name="Winters P."/>
            <person name="Wipat A."/>
            <person name="Yamamoto H."/>
            <person name="Yamane K."/>
            <person name="Yasumoto K."/>
            <person name="Yata K."/>
            <person name="Yoshida K."/>
            <person name="Yoshikawa H.-F."/>
            <person name="Zumstein E."/>
            <person name="Yoshikawa H."/>
            <person name="Danchin A."/>
        </authorList>
    </citation>
    <scope>NUCLEOTIDE SEQUENCE [LARGE SCALE GENOMIC DNA]</scope>
    <source>
        <strain>168</strain>
    </source>
</reference>
<reference key="4">
    <citation type="journal article" date="1990" name="Eur. J. Biochem.">
        <title>Purification and properties of phosphoribosyl-diphosphate synthetase from Bacillus subtilis.</title>
        <authorList>
            <person name="Arnvig K."/>
            <person name="Hove-Jensen B."/>
            <person name="Switzer R.L."/>
        </authorList>
    </citation>
    <scope>PROTEIN SEQUENCE OF 2-15</scope>
    <scope>FUNCTION</scope>
    <scope>CATALYTIC ACTIVITY</scope>
    <scope>COFACTOR</scope>
    <scope>BIOPHYSICOCHEMICAL PROPERTIES</scope>
    <scope>ACTIVITY REGULATION</scope>
    <scope>PATHWAY</scope>
</reference>
<reference key="5">
    <citation type="journal article" date="1987" name="Gene">
        <title>Phosphoribosylpyrophosphate synthetase of Bacillus subtilis. Cloning, characterization and chromosomal mapping of the prs gene.</title>
        <authorList>
            <person name="Nilsson D."/>
            <person name="Hove-Jensen B."/>
        </authorList>
    </citation>
    <scope>FUNCTION</scope>
    <scope>NOMENCLATURE</scope>
</reference>
<reference key="6">
    <citation type="journal article" date="2005" name="FEBS J.">
        <title>Catalytic residues Lys197 and Arg199 of Bacillus subtilis phosphoribosyl diphosphate synthase. Alanine-scanning mutagenesis of the flexible catalytic loop.</title>
        <authorList>
            <person name="Hove-Jensen B."/>
            <person name="Bentsen A.K."/>
            <person name="Harlow K.W."/>
        </authorList>
    </citation>
    <scope>FUNCTION</scope>
    <scope>CATALYTIC ACTIVITY</scope>
    <scope>MUTAGENESIS OF LYS-198; ARG-200; ARG-202; ASN-204 AND GLU-207</scope>
    <scope>BIOPHYSICOCHEMICAL PROPERTIES</scope>
    <scope>ACTIVITY REGULATION</scope>
    <scope>PATHWAY</scope>
    <scope>ACTIVE SITE</scope>
</reference>
<reference key="7">
    <citation type="journal article" date="2017" name="Microbiol. Mol. Biol. Rev.">
        <title>Phosphoribosyl diphosphate (PRPP): biosynthesis, enzymology, utilization, and metabolic significance.</title>
        <authorList>
            <person name="Hove-Jensen B."/>
            <person name="Andersen K.R."/>
            <person name="Kilstrup M."/>
            <person name="Martinussen J."/>
            <person name="Switzer R.L."/>
            <person name="Willemoes M."/>
        </authorList>
    </citation>
    <scope>REVIEW</scope>
    <scope>COFACTOR</scope>
    <scope>SUBUNIT</scope>
    <scope>ACTIVE SITE</scope>
</reference>
<reference key="8">
    <citation type="journal article" date="2000" name="Nat. Struct. Biol.">
        <title>Structural basis for the function of Bacillus subtilis phosphoribosyl-pyrophosphate synthetase.</title>
        <authorList>
            <person name="Eriksen T.A."/>
            <person name="Kadziola A."/>
            <person name="Bentsen A.-K."/>
            <person name="Harlow K.W."/>
            <person name="Larsen S."/>
        </authorList>
    </citation>
    <scope>X-RAY CRYSTALLOGRAPHY (2.2 ANGSTROMS) IN COMPLEX WITH ATP ANALOGS AND ALLOSTERIC INHIBITOR</scope>
    <scope>FUNCTION</scope>
    <scope>SUBUNIT</scope>
</reference>
<reference key="9">
    <citation type="journal article" date="2002" name="Protein Sci.">
        <title>Binding of cations in Bacillus subtilis phosphoribosyldiphosphate synthetase and their role in catalysis.</title>
        <authorList>
            <person name="Eriksen T.A."/>
            <person name="Kadziola A."/>
            <person name="Larsen S."/>
        </authorList>
    </citation>
    <scope>X-RAY CRYSTALLOGRAPHY (2.80 ANGSTROMS) IN COMPLEX WITH SUBSTRATE ANALOGS; ALLOSTERIC INHIBITOR AND CADMIUM IONS</scope>
    <scope>FUNCTION</scope>
    <scope>COFACTOR</scope>
    <scope>SUBUNIT</scope>
</reference>
<feature type="initiator methionine" description="Removed" evidence="6">
    <location>
        <position position="1"/>
    </location>
</feature>
<feature type="chain" id="PRO_0000141110" description="Ribose-phosphate pyrophosphokinase">
    <location>
        <begin position="2"/>
        <end position="317"/>
    </location>
</feature>
<feature type="active site" evidence="12 16">
    <location>
        <position position="198"/>
    </location>
</feature>
<feature type="binding site" evidence="2 14">
    <location>
        <begin position="43"/>
        <end position="45"/>
    </location>
    <ligand>
        <name>ATP</name>
        <dbReference type="ChEBI" id="CHEBI:30616"/>
    </ligand>
</feature>
<feature type="binding site" evidence="2 4 14 19 20">
    <location>
        <begin position="102"/>
        <end position="103"/>
    </location>
    <ligand>
        <name>ATP</name>
        <dbReference type="ChEBI" id="CHEBI:30616"/>
    </ligand>
</feature>
<feature type="binding site" evidence="14 19">
    <location>
        <position position="106"/>
    </location>
    <ligand>
        <name>ADP</name>
        <dbReference type="ChEBI" id="CHEBI:456216"/>
        <note>allosteric inhibitor</note>
    </ligand>
</feature>
<feature type="binding site" evidence="14 19">
    <location>
        <position position="110"/>
    </location>
    <ligand>
        <name>ADP</name>
        <dbReference type="ChEBI" id="CHEBI:456216"/>
        <note>allosteric inhibitor</note>
    </ligand>
</feature>
<feature type="binding site" evidence="2 12 15 20">
    <location>
        <position position="136"/>
    </location>
    <ligand>
        <name>Mg(2+)</name>
        <dbReference type="ChEBI" id="CHEBI:18420"/>
        <label>1</label>
    </ligand>
</feature>
<feature type="binding site" evidence="14 19">
    <location>
        <position position="141"/>
    </location>
    <ligand>
        <name>ADP</name>
        <dbReference type="ChEBI" id="CHEBI:456216"/>
        <note>allosteric inhibitor</note>
    </ligand>
</feature>
<feature type="binding site" evidence="14 19">
    <location>
        <begin position="149"/>
        <end position="150"/>
    </location>
    <ligand>
        <name>ADP</name>
        <dbReference type="ChEBI" id="CHEBI:456216"/>
        <note>allosteric inhibitor</note>
    </ligand>
</feature>
<feature type="binding site" evidence="2 12 15 20">
    <location>
        <position position="175"/>
    </location>
    <ligand>
        <name>Mg(2+)</name>
        <dbReference type="ChEBI" id="CHEBI:18420"/>
        <label>2</label>
    </ligand>
</feature>
<feature type="binding site" evidence="1 2">
    <location>
        <position position="200"/>
    </location>
    <ligand>
        <name>D-ribose 5-phosphate</name>
        <dbReference type="ChEBI" id="CHEBI:78346"/>
    </ligand>
</feature>
<feature type="binding site" evidence="1 2">
    <location>
        <position position="224"/>
    </location>
    <ligand>
        <name>D-ribose 5-phosphate</name>
        <dbReference type="ChEBI" id="CHEBI:78346"/>
    </ligand>
</feature>
<feature type="binding site" evidence="2 3 4 18 20">
    <location>
        <begin position="228"/>
        <end position="232"/>
    </location>
    <ligand>
        <name>D-ribose 5-phosphate</name>
        <dbReference type="ChEBI" id="CHEBI:78346"/>
    </ligand>
</feature>
<feature type="binding site" evidence="14 19">
    <location>
        <begin position="311"/>
        <end position="313"/>
    </location>
    <ligand>
        <name>ADP</name>
        <dbReference type="ChEBI" id="CHEBI:456216"/>
        <note>allosteric inhibitor</note>
    </ligand>
</feature>
<feature type="mutagenesis site" description="Strong decrease of the Vmax value compared to that of the wild-type. The affinity binding for ATP and Rib-5-P are slightly altered compared to the wild-type. The cooperativity of ADP binding is reduced." evidence="5">
    <original>K</original>
    <variation>A</variation>
    <location>
        <position position="198"/>
    </location>
</feature>
<feature type="mutagenesis site" description="Strong decrease of the Vmax value compared to that of the wild-type enzyme. The affinity binding for ATP and Rib-5-P are slightly altered compared to the wild-type." evidence="5">
    <original>R</original>
    <variation>A</variation>
    <location>
        <position position="200"/>
    </location>
</feature>
<feature type="mutagenesis site" description="3-fold decrease in the affinity binding for ATP. Slight decrease of the Vmax value." evidence="5">
    <original>R</original>
    <variation>A</variation>
    <location>
        <position position="202"/>
    </location>
</feature>
<feature type="mutagenesis site" description="4.5-fold decrease in the affinity binding for ATP. Slight decrease of the Vmax value." evidence="5">
    <original>N</original>
    <variation>A</variation>
    <location>
        <position position="204"/>
    </location>
</feature>
<feature type="mutagenesis site" description="2.5-fold decrease in the affinity binding for ATP. Slight decrease of the Vmax value." evidence="5">
    <original>E</original>
    <variation>A</variation>
    <location>
        <position position="207"/>
    </location>
</feature>
<feature type="strand" evidence="21">
    <location>
        <begin position="10"/>
        <end position="14"/>
    </location>
</feature>
<feature type="helix" evidence="21">
    <location>
        <begin position="19"/>
        <end position="29"/>
    </location>
</feature>
<feature type="strand" evidence="21">
    <location>
        <begin position="36"/>
        <end position="40"/>
    </location>
</feature>
<feature type="strand" evidence="22">
    <location>
        <begin position="42"/>
        <end position="44"/>
    </location>
</feature>
<feature type="strand" evidence="21">
    <location>
        <begin position="46"/>
        <end position="50"/>
    </location>
</feature>
<feature type="strand" evidence="21">
    <location>
        <begin position="58"/>
        <end position="62"/>
    </location>
</feature>
<feature type="helix" evidence="21">
    <location>
        <begin position="69"/>
        <end position="85"/>
    </location>
</feature>
<feature type="strand" evidence="21">
    <location>
        <begin position="89"/>
        <end position="97"/>
    </location>
</feature>
<feature type="turn" evidence="21">
    <location>
        <begin position="99"/>
        <end position="102"/>
    </location>
</feature>
<feature type="helix" evidence="21">
    <location>
        <begin position="114"/>
        <end position="125"/>
    </location>
</feature>
<feature type="strand" evidence="21">
    <location>
        <begin position="129"/>
        <end position="134"/>
    </location>
</feature>
<feature type="helix" evidence="21">
    <location>
        <begin position="138"/>
        <end position="143"/>
    </location>
</feature>
<feature type="strand" evidence="21">
    <location>
        <begin position="148"/>
        <end position="151"/>
    </location>
</feature>
<feature type="helix" evidence="21">
    <location>
        <begin position="154"/>
        <end position="162"/>
    </location>
</feature>
<feature type="turn" evidence="21">
    <location>
        <begin position="163"/>
        <end position="165"/>
    </location>
</feature>
<feature type="strand" evidence="21">
    <location>
        <begin position="168"/>
        <end position="175"/>
    </location>
</feature>
<feature type="helix" evidence="21">
    <location>
        <begin position="176"/>
        <end position="178"/>
    </location>
</feature>
<feature type="helix" evidence="21">
    <location>
        <begin position="179"/>
        <end position="188"/>
    </location>
</feature>
<feature type="strand" evidence="21">
    <location>
        <begin position="193"/>
        <end position="197"/>
    </location>
</feature>
<feature type="strand" evidence="21">
    <location>
        <begin position="210"/>
        <end position="213"/>
    </location>
</feature>
<feature type="strand" evidence="21">
    <location>
        <begin position="219"/>
        <end position="223"/>
    </location>
</feature>
<feature type="strand" evidence="21">
    <location>
        <begin position="225"/>
        <end position="229"/>
    </location>
</feature>
<feature type="helix" evidence="21">
    <location>
        <begin position="231"/>
        <end position="242"/>
    </location>
</feature>
<feature type="strand" evidence="21">
    <location>
        <begin position="246"/>
        <end position="251"/>
    </location>
</feature>
<feature type="strand" evidence="21">
    <location>
        <begin position="253"/>
        <end position="255"/>
    </location>
</feature>
<feature type="helix" evidence="21">
    <location>
        <begin position="261"/>
        <end position="266"/>
    </location>
</feature>
<feature type="strand" evidence="21">
    <location>
        <begin position="268"/>
        <end position="276"/>
    </location>
</feature>
<feature type="strand" evidence="21">
    <location>
        <begin position="288"/>
        <end position="293"/>
    </location>
</feature>
<feature type="helix" evidence="21">
    <location>
        <begin position="296"/>
        <end position="308"/>
    </location>
</feature>
<feature type="helix" evidence="21">
    <location>
        <begin position="313"/>
        <end position="315"/>
    </location>
</feature>
<sequence>MSNQYGDKNLKIFSLNSNPELAKEIADIVGVQLGKCSVTRFSDGEVQINIEESIRGCDCYIIQSTSDPVNEHIMELLIMVDALKRASAKTINIVIPYYGYARQDRKARSREPITAKLFANLLETAGATRVIALDLHAPQIQGFFDIPIDHLMGVPILGEYFEGKNLEDIVIVSPDHGGVTRARKLADRLKAPIAIIDKRRPRPNVAEVMNIVGNIEGKTAILIDDIIDTAGTITLAANALVENGAKEVYACCTHPVLSGPAVERINNSTIKELVVTNSIKLPEEKKIERFKQLSVGPLLAEAIIRVHEQQSVSYLFS</sequence>
<dbReference type="EC" id="2.7.6.1" evidence="2 5 6"/>
<dbReference type="EMBL" id="X16518">
    <property type="protein sequence ID" value="CAA34523.1"/>
    <property type="molecule type" value="Genomic_DNA"/>
</dbReference>
<dbReference type="EMBL" id="D26185">
    <property type="protein sequence ID" value="BAA05286.1"/>
    <property type="molecule type" value="Genomic_DNA"/>
</dbReference>
<dbReference type="EMBL" id="AL009126">
    <property type="protein sequence ID" value="CAB11827.1"/>
    <property type="molecule type" value="Genomic_DNA"/>
</dbReference>
<dbReference type="PIR" id="S05372">
    <property type="entry name" value="KIBSRS"/>
</dbReference>
<dbReference type="RefSeq" id="NP_387932.1">
    <property type="nucleotide sequence ID" value="NC_000964.3"/>
</dbReference>
<dbReference type="RefSeq" id="WP_003218353.1">
    <property type="nucleotide sequence ID" value="NZ_OZ025638.1"/>
</dbReference>
<dbReference type="PDB" id="1DKR">
    <property type="method" value="X-ray"/>
    <property type="resolution" value="2.30 A"/>
    <property type="chains" value="A/B=1-317"/>
</dbReference>
<dbReference type="PDB" id="1DKU">
    <property type="method" value="X-ray"/>
    <property type="resolution" value="2.20 A"/>
    <property type="chains" value="A/B=1-317"/>
</dbReference>
<dbReference type="PDB" id="1IBS">
    <property type="method" value="X-ray"/>
    <property type="resolution" value="2.80 A"/>
    <property type="chains" value="A/B=1-317"/>
</dbReference>
<dbReference type="PDBsum" id="1DKR"/>
<dbReference type="PDBsum" id="1DKU"/>
<dbReference type="PDBsum" id="1IBS"/>
<dbReference type="SMR" id="P14193"/>
<dbReference type="FunCoup" id="P14193">
    <property type="interactions" value="819"/>
</dbReference>
<dbReference type="IntAct" id="P14193">
    <property type="interactions" value="2"/>
</dbReference>
<dbReference type="MINT" id="P14193"/>
<dbReference type="STRING" id="224308.BSU00510"/>
<dbReference type="DrugBank" id="DB03148">
    <property type="generic name" value="Adenosine 5'-methylenediphosphate"/>
</dbReference>
<dbReference type="DrugBank" id="DB02798">
    <property type="generic name" value="Alpha-Methylene Adenosine Monophosphate"/>
</dbReference>
<dbReference type="jPOST" id="P14193"/>
<dbReference type="PaxDb" id="224308-BSU00510"/>
<dbReference type="EnsemblBacteria" id="CAB11827">
    <property type="protein sequence ID" value="CAB11827"/>
    <property type="gene ID" value="BSU_00510"/>
</dbReference>
<dbReference type="GeneID" id="936985"/>
<dbReference type="KEGG" id="bsu:BSU00510"/>
<dbReference type="PATRIC" id="fig|224308.179.peg.51"/>
<dbReference type="eggNOG" id="COG0462">
    <property type="taxonomic scope" value="Bacteria"/>
</dbReference>
<dbReference type="InParanoid" id="P14193"/>
<dbReference type="OrthoDB" id="9777067at2"/>
<dbReference type="PhylomeDB" id="P14193"/>
<dbReference type="BioCyc" id="BSUB:BSU00510-MONOMER"/>
<dbReference type="SABIO-RK" id="P14193"/>
<dbReference type="UniPathway" id="UPA00087">
    <property type="reaction ID" value="UER00172"/>
</dbReference>
<dbReference type="EvolutionaryTrace" id="P14193"/>
<dbReference type="PRO" id="PR:P14193"/>
<dbReference type="Proteomes" id="UP000001570">
    <property type="component" value="Chromosome"/>
</dbReference>
<dbReference type="GO" id="GO:0005737">
    <property type="term" value="C:cytoplasm"/>
    <property type="evidence" value="ECO:0000318"/>
    <property type="project" value="GO_Central"/>
</dbReference>
<dbReference type="GO" id="GO:0002189">
    <property type="term" value="C:ribose phosphate diphosphokinase complex"/>
    <property type="evidence" value="ECO:0000318"/>
    <property type="project" value="GO_Central"/>
</dbReference>
<dbReference type="GO" id="GO:0005524">
    <property type="term" value="F:ATP binding"/>
    <property type="evidence" value="ECO:0007669"/>
    <property type="project" value="UniProtKB-KW"/>
</dbReference>
<dbReference type="GO" id="GO:0016301">
    <property type="term" value="F:kinase activity"/>
    <property type="evidence" value="ECO:0007669"/>
    <property type="project" value="UniProtKB-KW"/>
</dbReference>
<dbReference type="GO" id="GO:0000287">
    <property type="term" value="F:magnesium ion binding"/>
    <property type="evidence" value="ECO:0007669"/>
    <property type="project" value="UniProtKB-UniRule"/>
</dbReference>
<dbReference type="GO" id="GO:0004749">
    <property type="term" value="F:ribose phosphate diphosphokinase activity"/>
    <property type="evidence" value="ECO:0000318"/>
    <property type="project" value="GO_Central"/>
</dbReference>
<dbReference type="GO" id="GO:0006015">
    <property type="term" value="P:5-phosphoribose 1-diphosphate biosynthetic process"/>
    <property type="evidence" value="ECO:0000318"/>
    <property type="project" value="GO_Central"/>
</dbReference>
<dbReference type="GO" id="GO:0006164">
    <property type="term" value="P:purine nucleotide biosynthetic process"/>
    <property type="evidence" value="ECO:0000318"/>
    <property type="project" value="GO_Central"/>
</dbReference>
<dbReference type="GO" id="GO:0009156">
    <property type="term" value="P:ribonucleoside monophosphate biosynthetic process"/>
    <property type="evidence" value="ECO:0007669"/>
    <property type="project" value="InterPro"/>
</dbReference>
<dbReference type="CDD" id="cd06223">
    <property type="entry name" value="PRTases_typeI"/>
    <property type="match status" value="1"/>
</dbReference>
<dbReference type="FunFam" id="3.40.50.2020:FF:000001">
    <property type="entry name" value="Ribose-phosphate pyrophosphokinase"/>
    <property type="match status" value="1"/>
</dbReference>
<dbReference type="FunFam" id="3.40.50.2020:FF:000002">
    <property type="entry name" value="Ribose-phosphate pyrophosphokinase"/>
    <property type="match status" value="1"/>
</dbReference>
<dbReference type="Gene3D" id="3.40.50.2020">
    <property type="match status" value="2"/>
</dbReference>
<dbReference type="HAMAP" id="MF_00583_B">
    <property type="entry name" value="RibP_PPkinase_B"/>
    <property type="match status" value="1"/>
</dbReference>
<dbReference type="InterPro" id="IPR000842">
    <property type="entry name" value="PRib_PP_synth_CS"/>
</dbReference>
<dbReference type="InterPro" id="IPR029099">
    <property type="entry name" value="Pribosyltran_N"/>
</dbReference>
<dbReference type="InterPro" id="IPR000836">
    <property type="entry name" value="PRibTrfase_dom"/>
</dbReference>
<dbReference type="InterPro" id="IPR029057">
    <property type="entry name" value="PRTase-like"/>
</dbReference>
<dbReference type="InterPro" id="IPR005946">
    <property type="entry name" value="Rib-P_diPkinase"/>
</dbReference>
<dbReference type="InterPro" id="IPR037515">
    <property type="entry name" value="Rib-P_diPkinase_bac"/>
</dbReference>
<dbReference type="NCBIfam" id="NF002320">
    <property type="entry name" value="PRK01259.1"/>
    <property type="match status" value="1"/>
</dbReference>
<dbReference type="NCBIfam" id="NF002618">
    <property type="entry name" value="PRK02269.1"/>
    <property type="match status" value="1"/>
</dbReference>
<dbReference type="NCBIfam" id="TIGR01251">
    <property type="entry name" value="ribP_PPkin"/>
    <property type="match status" value="1"/>
</dbReference>
<dbReference type="PANTHER" id="PTHR10210">
    <property type="entry name" value="RIBOSE-PHOSPHATE DIPHOSPHOKINASE FAMILY MEMBER"/>
    <property type="match status" value="1"/>
</dbReference>
<dbReference type="PANTHER" id="PTHR10210:SF41">
    <property type="entry name" value="RIBOSE-PHOSPHATE PYROPHOSPHOKINASE 1, CHLOROPLASTIC"/>
    <property type="match status" value="1"/>
</dbReference>
<dbReference type="Pfam" id="PF14572">
    <property type="entry name" value="Pribosyl_synth"/>
    <property type="match status" value="1"/>
</dbReference>
<dbReference type="Pfam" id="PF13793">
    <property type="entry name" value="Pribosyltran_N"/>
    <property type="match status" value="1"/>
</dbReference>
<dbReference type="SMART" id="SM01400">
    <property type="entry name" value="Pribosyltran_N"/>
    <property type="match status" value="1"/>
</dbReference>
<dbReference type="SUPFAM" id="SSF53271">
    <property type="entry name" value="PRTase-like"/>
    <property type="match status" value="1"/>
</dbReference>
<dbReference type="PROSITE" id="PS00114">
    <property type="entry name" value="PRPP_SYNTHASE"/>
    <property type="match status" value="1"/>
</dbReference>
<evidence type="ECO:0000250" key="1">
    <source>
        <dbReference type="UniProtKB" id="Q97CA5"/>
    </source>
</evidence>
<evidence type="ECO:0000255" key="2">
    <source>
        <dbReference type="HAMAP-Rule" id="MF_00583"/>
    </source>
</evidence>
<evidence type="ECO:0000269" key="3">
    <source>
    </source>
</evidence>
<evidence type="ECO:0000269" key="4">
    <source>
    </source>
</evidence>
<evidence type="ECO:0000269" key="5">
    <source>
    </source>
</evidence>
<evidence type="ECO:0000269" key="6">
    <source>
    </source>
</evidence>
<evidence type="ECO:0000269" key="7">
    <source>
    </source>
</evidence>
<evidence type="ECO:0000303" key="8">
    <source>
    </source>
</evidence>
<evidence type="ECO:0000303" key="9">
    <source>
    </source>
</evidence>
<evidence type="ECO:0000303" key="10">
    <source>
    </source>
</evidence>
<evidence type="ECO:0000303" key="11">
    <source>
    </source>
</evidence>
<evidence type="ECO:0000303" key="12">
    <source>
    </source>
</evidence>
<evidence type="ECO:0000303" key="13">
    <source>
    </source>
</evidence>
<evidence type="ECO:0000305" key="14">
    <source>
    </source>
</evidence>
<evidence type="ECO:0000305" key="15">
    <source>
    </source>
</evidence>
<evidence type="ECO:0000305" key="16">
    <source>
    </source>
</evidence>
<evidence type="ECO:0000305" key="17">
    <source>
    </source>
</evidence>
<evidence type="ECO:0007744" key="18">
    <source>
        <dbReference type="PDB" id="1DKR"/>
    </source>
</evidence>
<evidence type="ECO:0007744" key="19">
    <source>
        <dbReference type="PDB" id="1DKU"/>
    </source>
</evidence>
<evidence type="ECO:0007744" key="20">
    <source>
        <dbReference type="PDB" id="1IBS"/>
    </source>
</evidence>
<evidence type="ECO:0007829" key="21">
    <source>
        <dbReference type="PDB" id="1DKU"/>
    </source>
</evidence>
<evidence type="ECO:0007829" key="22">
    <source>
        <dbReference type="PDB" id="1IBS"/>
    </source>
</evidence>
<name>KPRS_BACSU</name>
<organism>
    <name type="scientific">Bacillus subtilis (strain 168)</name>
    <dbReference type="NCBI Taxonomy" id="224308"/>
    <lineage>
        <taxon>Bacteria</taxon>
        <taxon>Bacillati</taxon>
        <taxon>Bacillota</taxon>
        <taxon>Bacilli</taxon>
        <taxon>Bacillales</taxon>
        <taxon>Bacillaceae</taxon>
        <taxon>Bacillus</taxon>
    </lineage>
</organism>
<accession>P14193</accession>